<accession>Q8FPJ9</accession>
<organism>
    <name type="scientific">Corynebacterium efficiens (strain DSM 44549 / YS-314 / AJ 12310 / JCM 11189 / NBRC 100395)</name>
    <dbReference type="NCBI Taxonomy" id="196164"/>
    <lineage>
        <taxon>Bacteria</taxon>
        <taxon>Bacillati</taxon>
        <taxon>Actinomycetota</taxon>
        <taxon>Actinomycetes</taxon>
        <taxon>Mycobacteriales</taxon>
        <taxon>Corynebacteriaceae</taxon>
        <taxon>Corynebacterium</taxon>
    </lineage>
</organism>
<gene>
    <name evidence="1" type="primary">pdxS</name>
    <name type="ordered locus">CE1779</name>
</gene>
<comment type="function">
    <text evidence="1">Catalyzes the formation of pyridoxal 5'-phosphate from ribose 5-phosphate (RBP), glyceraldehyde 3-phosphate (G3P) and ammonia. The ammonia is provided by the PdxT subunit. Can also use ribulose 5-phosphate and dihydroxyacetone phosphate as substrates, resulting from enzyme-catalyzed isomerization of RBP and G3P, respectively.</text>
</comment>
<comment type="catalytic activity">
    <reaction evidence="1">
        <text>aldehydo-D-ribose 5-phosphate + D-glyceraldehyde 3-phosphate + L-glutamine = pyridoxal 5'-phosphate + L-glutamate + phosphate + 3 H2O + H(+)</text>
        <dbReference type="Rhea" id="RHEA:31507"/>
        <dbReference type="ChEBI" id="CHEBI:15377"/>
        <dbReference type="ChEBI" id="CHEBI:15378"/>
        <dbReference type="ChEBI" id="CHEBI:29985"/>
        <dbReference type="ChEBI" id="CHEBI:43474"/>
        <dbReference type="ChEBI" id="CHEBI:58273"/>
        <dbReference type="ChEBI" id="CHEBI:58359"/>
        <dbReference type="ChEBI" id="CHEBI:59776"/>
        <dbReference type="ChEBI" id="CHEBI:597326"/>
        <dbReference type="EC" id="4.3.3.6"/>
    </reaction>
</comment>
<comment type="pathway">
    <text evidence="1">Cofactor biosynthesis; pyridoxal 5'-phosphate biosynthesis.</text>
</comment>
<comment type="subunit">
    <text evidence="1">In the presence of PdxT, forms a dodecamer of heterodimers.</text>
</comment>
<comment type="similarity">
    <text evidence="1">Belongs to the PdxS/SNZ family.</text>
</comment>
<protein>
    <recommendedName>
        <fullName evidence="1">Pyridoxal 5'-phosphate synthase subunit PdxS</fullName>
        <shortName evidence="1">PLP synthase subunit PdxS</shortName>
        <ecNumber evidence="1">4.3.3.6</ecNumber>
    </recommendedName>
    <alternativeName>
        <fullName evidence="1">Pdx1</fullName>
    </alternativeName>
</protein>
<sequence length="297" mass="31473">MSAPTTNAAPRAKTGYADRFKGGVIMDVVNPEQARIAEAAGAVAVMALERVPADIRAQGGVSRMSDPDMIDGILEAVDIPVMAKARIGHFVEAQVLQSLGVHFIDESEVLTPADYANHIDKFAFEVPFVCGATNLGEALRRVNEGAAMIRSKGEAGTGDVSNAVTHMRTIRAEINRLTSMAEDELYVAAKELQAPYELVVHVAREGKLPVPLLTAGGIATPADAAMMMQLGADGVFVGSGIFKSGNPEQRARAIVAATQNYNDPDTIARVSRGLGEAMVGINVDDLPVSHRLAERGW</sequence>
<evidence type="ECO:0000255" key="1">
    <source>
        <dbReference type="HAMAP-Rule" id="MF_01824"/>
    </source>
</evidence>
<feature type="chain" id="PRO_0000109389" description="Pyridoxal 5'-phosphate synthase subunit PdxS">
    <location>
        <begin position="1"/>
        <end position="297"/>
    </location>
</feature>
<feature type="active site" description="Schiff-base intermediate with D-ribose 5-phosphate" evidence="1">
    <location>
        <position position="84"/>
    </location>
</feature>
<feature type="binding site" evidence="1">
    <location>
        <position position="27"/>
    </location>
    <ligand>
        <name>D-ribose 5-phosphate</name>
        <dbReference type="ChEBI" id="CHEBI:78346"/>
    </ligand>
</feature>
<feature type="binding site" evidence="1">
    <location>
        <position position="156"/>
    </location>
    <ligand>
        <name>D-ribose 5-phosphate</name>
        <dbReference type="ChEBI" id="CHEBI:78346"/>
    </ligand>
</feature>
<feature type="binding site" evidence="1">
    <location>
        <position position="168"/>
    </location>
    <ligand>
        <name>D-glyceraldehyde 3-phosphate</name>
        <dbReference type="ChEBI" id="CHEBI:59776"/>
    </ligand>
</feature>
<feature type="binding site" evidence="1">
    <location>
        <position position="217"/>
    </location>
    <ligand>
        <name>D-ribose 5-phosphate</name>
        <dbReference type="ChEBI" id="CHEBI:78346"/>
    </ligand>
</feature>
<feature type="binding site" evidence="1">
    <location>
        <begin position="238"/>
        <end position="239"/>
    </location>
    <ligand>
        <name>D-ribose 5-phosphate</name>
        <dbReference type="ChEBI" id="CHEBI:78346"/>
    </ligand>
</feature>
<proteinExistence type="inferred from homology"/>
<dbReference type="EC" id="4.3.3.6" evidence="1"/>
<dbReference type="EMBL" id="BA000035">
    <property type="protein sequence ID" value="BAC18589.1"/>
    <property type="molecule type" value="Genomic_DNA"/>
</dbReference>
<dbReference type="RefSeq" id="WP_006767776.1">
    <property type="nucleotide sequence ID" value="NC_004369.1"/>
</dbReference>
<dbReference type="SMR" id="Q8FPJ9"/>
<dbReference type="STRING" id="196164.gene:10742200"/>
<dbReference type="KEGG" id="cef:CE1779"/>
<dbReference type="eggNOG" id="COG0214">
    <property type="taxonomic scope" value="Bacteria"/>
</dbReference>
<dbReference type="HOGENOM" id="CLU_055352_1_0_11"/>
<dbReference type="OrthoDB" id="9772545at2"/>
<dbReference type="UniPathway" id="UPA00245"/>
<dbReference type="Proteomes" id="UP000001409">
    <property type="component" value="Chromosome"/>
</dbReference>
<dbReference type="GO" id="GO:0036381">
    <property type="term" value="F:pyridoxal 5'-phosphate synthase (glutamine hydrolysing) activity"/>
    <property type="evidence" value="ECO:0007669"/>
    <property type="project" value="UniProtKB-UniRule"/>
</dbReference>
<dbReference type="GO" id="GO:0006520">
    <property type="term" value="P:amino acid metabolic process"/>
    <property type="evidence" value="ECO:0007669"/>
    <property type="project" value="TreeGrafter"/>
</dbReference>
<dbReference type="GO" id="GO:0042823">
    <property type="term" value="P:pyridoxal phosphate biosynthetic process"/>
    <property type="evidence" value="ECO:0007669"/>
    <property type="project" value="UniProtKB-UniRule"/>
</dbReference>
<dbReference type="GO" id="GO:0008615">
    <property type="term" value="P:pyridoxine biosynthetic process"/>
    <property type="evidence" value="ECO:0007669"/>
    <property type="project" value="TreeGrafter"/>
</dbReference>
<dbReference type="CDD" id="cd04727">
    <property type="entry name" value="pdxS"/>
    <property type="match status" value="1"/>
</dbReference>
<dbReference type="FunFam" id="3.20.20.70:FF:000001">
    <property type="entry name" value="Pyridoxine biosynthesis protein PDX1"/>
    <property type="match status" value="1"/>
</dbReference>
<dbReference type="Gene3D" id="3.20.20.70">
    <property type="entry name" value="Aldolase class I"/>
    <property type="match status" value="1"/>
</dbReference>
<dbReference type="HAMAP" id="MF_01824">
    <property type="entry name" value="PdxS"/>
    <property type="match status" value="1"/>
</dbReference>
<dbReference type="InterPro" id="IPR013785">
    <property type="entry name" value="Aldolase_TIM"/>
</dbReference>
<dbReference type="InterPro" id="IPR001852">
    <property type="entry name" value="PdxS/SNZ"/>
</dbReference>
<dbReference type="InterPro" id="IPR033755">
    <property type="entry name" value="PdxS/SNZ_N"/>
</dbReference>
<dbReference type="InterPro" id="IPR011060">
    <property type="entry name" value="RibuloseP-bd_barrel"/>
</dbReference>
<dbReference type="NCBIfam" id="NF003215">
    <property type="entry name" value="PRK04180.1"/>
    <property type="match status" value="1"/>
</dbReference>
<dbReference type="NCBIfam" id="TIGR00343">
    <property type="entry name" value="pyridoxal 5'-phosphate synthase lyase subunit PdxS"/>
    <property type="match status" value="1"/>
</dbReference>
<dbReference type="PANTHER" id="PTHR31829">
    <property type="entry name" value="PYRIDOXAL 5'-PHOSPHATE SYNTHASE SUBUNIT SNZ1-RELATED"/>
    <property type="match status" value="1"/>
</dbReference>
<dbReference type="PANTHER" id="PTHR31829:SF0">
    <property type="entry name" value="PYRIDOXAL 5'-PHOSPHATE SYNTHASE SUBUNIT SNZ1-RELATED"/>
    <property type="match status" value="1"/>
</dbReference>
<dbReference type="Pfam" id="PF01680">
    <property type="entry name" value="SOR_SNZ"/>
    <property type="match status" value="1"/>
</dbReference>
<dbReference type="PIRSF" id="PIRSF029271">
    <property type="entry name" value="Pdx1"/>
    <property type="match status" value="1"/>
</dbReference>
<dbReference type="SUPFAM" id="SSF51366">
    <property type="entry name" value="Ribulose-phoshate binding barrel"/>
    <property type="match status" value="1"/>
</dbReference>
<dbReference type="PROSITE" id="PS01235">
    <property type="entry name" value="PDXS_SNZ_1"/>
    <property type="match status" value="1"/>
</dbReference>
<dbReference type="PROSITE" id="PS51129">
    <property type="entry name" value="PDXS_SNZ_2"/>
    <property type="match status" value="1"/>
</dbReference>
<name>PDXS_COREF</name>
<keyword id="KW-0456">Lyase</keyword>
<keyword id="KW-0663">Pyridoxal phosphate</keyword>
<keyword id="KW-1185">Reference proteome</keyword>
<keyword id="KW-0704">Schiff base</keyword>
<reference key="1">
    <citation type="journal article" date="2003" name="Genome Res.">
        <title>Comparative complete genome sequence analysis of the amino acid replacements responsible for the thermostability of Corynebacterium efficiens.</title>
        <authorList>
            <person name="Nishio Y."/>
            <person name="Nakamura Y."/>
            <person name="Kawarabayasi Y."/>
            <person name="Usuda Y."/>
            <person name="Kimura E."/>
            <person name="Sugimoto S."/>
            <person name="Matsui K."/>
            <person name="Yamagishi A."/>
            <person name="Kikuchi H."/>
            <person name="Ikeo K."/>
            <person name="Gojobori T."/>
        </authorList>
    </citation>
    <scope>NUCLEOTIDE SEQUENCE [LARGE SCALE GENOMIC DNA]</scope>
    <source>
        <strain>DSM 44549 / YS-314 / AJ 12310 / JCM 11189 / NBRC 100395</strain>
    </source>
</reference>